<proteinExistence type="inferred from homology"/>
<organism>
    <name type="scientific">Mycobacterium leprae (strain TN)</name>
    <dbReference type="NCBI Taxonomy" id="272631"/>
    <lineage>
        <taxon>Bacteria</taxon>
        <taxon>Bacillati</taxon>
        <taxon>Actinomycetota</taxon>
        <taxon>Actinomycetes</taxon>
        <taxon>Mycobacteriales</taxon>
        <taxon>Mycobacteriaceae</taxon>
        <taxon>Mycobacterium</taxon>
    </lineage>
</organism>
<feature type="signal peptide" evidence="1">
    <location>
        <begin position="1"/>
        <end position="15"/>
    </location>
</feature>
<feature type="chain" id="PRO_0000014155" description="Uncharacterized protein ML0378">
    <location>
        <begin position="16"/>
        <end position="359"/>
    </location>
</feature>
<feature type="domain" description="N-acetyltransferase" evidence="2">
    <location>
        <begin position="212"/>
        <end position="359"/>
    </location>
</feature>
<name>Y378_MYCLE</name>
<sequence>MSIVLAIDTATAAVTAGIVAFDGHDCFTLAERVTVDAKAHVERLTPNVLVALADAELAMCELDAVVVGCGPGPFTGLRVGMATAAAYGHALGIPVHGVCSLDAIGVRTTGDTLVVTDARRHEVYWARYRDGVRIAGPAVGSPTDVDPGTALTVAGSPEHAALFGLPLCEPIYPTPAGLVAAVPDWSVSPIPLVALYLRRPDAKPITADNEPIVIGTLTPADVDRCAQLESQFFDGDNPWPAAAFDRELANSYNCYVGARTADTLVGYAGITRLGHTPPFEYEVHTIAVDPAYRGRGVGRRLLGELLDFAGSGAIYLEVRTDNETAIALYRSVGFERIGLRPRYYPASGADAYLMRREAQ</sequence>
<evidence type="ECO:0000255" key="1"/>
<evidence type="ECO:0000255" key="2">
    <source>
        <dbReference type="PROSITE-ProRule" id="PRU00532"/>
    </source>
</evidence>
<reference key="1">
    <citation type="submission" date="1994-03" db="EMBL/GenBank/DDBJ databases">
        <authorList>
            <person name="Smith D.R."/>
            <person name="Robison K."/>
        </authorList>
    </citation>
    <scope>NUCLEOTIDE SEQUENCE [GENOMIC DNA]</scope>
</reference>
<reference key="2">
    <citation type="journal article" date="2001" name="Nature">
        <title>Massive gene decay in the leprosy bacillus.</title>
        <authorList>
            <person name="Cole S.T."/>
            <person name="Eiglmeier K."/>
            <person name="Parkhill J."/>
            <person name="James K.D."/>
            <person name="Thomson N.R."/>
            <person name="Wheeler P.R."/>
            <person name="Honore N."/>
            <person name="Garnier T."/>
            <person name="Churcher C.M."/>
            <person name="Harris D.E."/>
            <person name="Mungall K.L."/>
            <person name="Basham D."/>
            <person name="Brown D."/>
            <person name="Chillingworth T."/>
            <person name="Connor R."/>
            <person name="Davies R.M."/>
            <person name="Devlin K."/>
            <person name="Duthoy S."/>
            <person name="Feltwell T."/>
            <person name="Fraser A."/>
            <person name="Hamlin N."/>
            <person name="Holroyd S."/>
            <person name="Hornsby T."/>
            <person name="Jagels K."/>
            <person name="Lacroix C."/>
            <person name="Maclean J."/>
            <person name="Moule S."/>
            <person name="Murphy L.D."/>
            <person name="Oliver K."/>
            <person name="Quail M.A."/>
            <person name="Rajandream M.A."/>
            <person name="Rutherford K.M."/>
            <person name="Rutter S."/>
            <person name="Seeger K."/>
            <person name="Simon S."/>
            <person name="Simmonds M."/>
            <person name="Skelton J."/>
            <person name="Squares R."/>
            <person name="Squares S."/>
            <person name="Stevens K."/>
            <person name="Taylor K."/>
            <person name="Whitehead S."/>
            <person name="Woodward J.R."/>
            <person name="Barrell B.G."/>
        </authorList>
    </citation>
    <scope>NUCLEOTIDE SEQUENCE [LARGE SCALE GENOMIC DNA]</scope>
    <source>
        <strain>TN</strain>
    </source>
</reference>
<protein>
    <recommendedName>
        <fullName>Uncharacterized protein ML0378</fullName>
    </recommendedName>
</protein>
<gene>
    <name type="ordered locus">ML0378</name>
    <name type="ORF">B229_C1_170</name>
</gene>
<keyword id="KW-1185">Reference proteome</keyword>
<keyword id="KW-0732">Signal</keyword>
<accession>Q49857</accession>
<dbReference type="EMBL" id="U00020">
    <property type="protein sequence ID" value="AAA17291.1"/>
    <property type="molecule type" value="Genomic_DNA"/>
</dbReference>
<dbReference type="EMBL" id="AL583918">
    <property type="protein sequence ID" value="CAC29886.1"/>
    <property type="molecule type" value="Genomic_DNA"/>
</dbReference>
<dbReference type="PIR" id="S72977">
    <property type="entry name" value="S72977"/>
</dbReference>
<dbReference type="RefSeq" id="NP_301370.1">
    <property type="nucleotide sequence ID" value="NC_002677.1"/>
</dbReference>
<dbReference type="SMR" id="Q49857"/>
<dbReference type="STRING" id="272631.gene:17574197"/>
<dbReference type="KEGG" id="mle:ML0378"/>
<dbReference type="PATRIC" id="fig|272631.5.peg.640"/>
<dbReference type="Leproma" id="ML0378"/>
<dbReference type="eggNOG" id="COG0456">
    <property type="taxonomic scope" value="Bacteria"/>
</dbReference>
<dbReference type="eggNOG" id="COG1214">
    <property type="taxonomic scope" value="Bacteria"/>
</dbReference>
<dbReference type="HOGENOM" id="CLU_771216_0_0_11"/>
<dbReference type="OrthoDB" id="9809995at2"/>
<dbReference type="Proteomes" id="UP000000806">
    <property type="component" value="Chromosome"/>
</dbReference>
<dbReference type="GO" id="GO:0008999">
    <property type="term" value="F:protein-N-terminal-alanine acetyltransferase activity"/>
    <property type="evidence" value="ECO:0007669"/>
    <property type="project" value="TreeGrafter"/>
</dbReference>
<dbReference type="GO" id="GO:0002949">
    <property type="term" value="P:tRNA threonylcarbamoyladenosine modification"/>
    <property type="evidence" value="ECO:0007669"/>
    <property type="project" value="InterPro"/>
</dbReference>
<dbReference type="CDD" id="cd24032">
    <property type="entry name" value="ASKHA_NBD_TsaB"/>
    <property type="match status" value="1"/>
</dbReference>
<dbReference type="CDD" id="cd04301">
    <property type="entry name" value="NAT_SF"/>
    <property type="match status" value="1"/>
</dbReference>
<dbReference type="Gene3D" id="3.30.420.40">
    <property type="match status" value="1"/>
</dbReference>
<dbReference type="Gene3D" id="3.40.630.30">
    <property type="match status" value="1"/>
</dbReference>
<dbReference type="InterPro" id="IPR006464">
    <property type="entry name" value="AcTrfase_RimI/Ard1"/>
</dbReference>
<dbReference type="InterPro" id="IPR016181">
    <property type="entry name" value="Acyl_CoA_acyltransferase"/>
</dbReference>
<dbReference type="InterPro" id="IPR043129">
    <property type="entry name" value="ATPase_NBD"/>
</dbReference>
<dbReference type="InterPro" id="IPR000905">
    <property type="entry name" value="Gcp-like_dom"/>
</dbReference>
<dbReference type="InterPro" id="IPR000182">
    <property type="entry name" value="GNAT_dom"/>
</dbReference>
<dbReference type="InterPro" id="IPR050276">
    <property type="entry name" value="MshD_Acetyltransferase"/>
</dbReference>
<dbReference type="InterPro" id="IPR022496">
    <property type="entry name" value="T6A_TsaB"/>
</dbReference>
<dbReference type="NCBIfam" id="TIGR01575">
    <property type="entry name" value="rimI"/>
    <property type="match status" value="1"/>
</dbReference>
<dbReference type="NCBIfam" id="TIGR03725">
    <property type="entry name" value="T6A_YeaZ"/>
    <property type="match status" value="1"/>
</dbReference>
<dbReference type="PANTHER" id="PTHR43617">
    <property type="entry name" value="L-AMINO ACID N-ACETYLTRANSFERASE"/>
    <property type="match status" value="1"/>
</dbReference>
<dbReference type="PANTHER" id="PTHR43617:SF20">
    <property type="entry name" value="N-ALPHA-ACETYLTRANSFERASE RIMI"/>
    <property type="match status" value="1"/>
</dbReference>
<dbReference type="Pfam" id="PF00583">
    <property type="entry name" value="Acetyltransf_1"/>
    <property type="match status" value="1"/>
</dbReference>
<dbReference type="Pfam" id="PF00814">
    <property type="entry name" value="TsaD"/>
    <property type="match status" value="1"/>
</dbReference>
<dbReference type="SUPFAM" id="SSF53067">
    <property type="entry name" value="Actin-like ATPase domain"/>
    <property type="match status" value="1"/>
</dbReference>
<dbReference type="SUPFAM" id="SSF55729">
    <property type="entry name" value="Acyl-CoA N-acyltransferases (Nat)"/>
    <property type="match status" value="1"/>
</dbReference>
<dbReference type="PROSITE" id="PS51186">
    <property type="entry name" value="GNAT"/>
    <property type="match status" value="1"/>
</dbReference>